<gene>
    <name evidence="1" type="primary">gpmI</name>
    <name type="ordered locus">RHOS4_25480</name>
    <name type="ordered locus">RSP_0934</name>
</gene>
<sequence length="506" mass="53703">MTAPKPVVLCILDGWGLRAEREANAVALAETPTFDRLMATCPNATLVTHGPDVGLPRGQMGNSEVGHTNIGAGRVVAMDLGAIDLAIEEGSFPQNPALRDFIGKVKAKSGTAHLMGVVSDGGVHGHIQHLISAVEVLAGEGIPVVIHAITDGRDVAPTSAGEFVGQLVRVLPEGARIGTVIGRYWAMDRDKRWDRVKRASDAMLHATGEHAPDAEAAVAAALARGETDEFIAPTVVGDYAGARDGDGFFCLNFRADRAREILAGLAQPGFDAYDTGARPDWSAFLGMVDYSKEHDRFMTTAYPKPVIRNTLGEWVASHGLRQFRIAETEKYPHVTFFLNGGREAPETGEDRYMANSPKVATYDLQPEMSAPDVSDHLVEAIGAGYDLIVVNYANPDMVGHTGDLKAAMAAVEEVDRGLGRAVEAVTKAGGAMIVTADHGNCETMVDPETGGPHTAHTTNPVPVILVNGPAGARLHAGRLADLAPTLLQLMQLPQPEEMTGRSLIDA</sequence>
<protein>
    <recommendedName>
        <fullName evidence="1">2,3-bisphosphoglycerate-independent phosphoglycerate mutase</fullName>
        <shortName evidence="1">BPG-independent PGAM</shortName>
        <shortName evidence="1">Phosphoglyceromutase</shortName>
        <shortName evidence="1">iPGM</shortName>
        <ecNumber evidence="1">5.4.2.12</ecNumber>
    </recommendedName>
</protein>
<keyword id="KW-0324">Glycolysis</keyword>
<keyword id="KW-0413">Isomerase</keyword>
<keyword id="KW-0464">Manganese</keyword>
<keyword id="KW-0479">Metal-binding</keyword>
<keyword id="KW-1185">Reference proteome</keyword>
<evidence type="ECO:0000255" key="1">
    <source>
        <dbReference type="HAMAP-Rule" id="MF_01038"/>
    </source>
</evidence>
<organism>
    <name type="scientific">Cereibacter sphaeroides (strain ATCC 17023 / DSM 158 / JCM 6121 / CCUG 31486 / LMG 2827 / NBRC 12203 / NCIMB 8253 / ATH 2.4.1.)</name>
    <name type="common">Rhodobacter sphaeroides</name>
    <dbReference type="NCBI Taxonomy" id="272943"/>
    <lineage>
        <taxon>Bacteria</taxon>
        <taxon>Pseudomonadati</taxon>
        <taxon>Pseudomonadota</taxon>
        <taxon>Alphaproteobacteria</taxon>
        <taxon>Rhodobacterales</taxon>
        <taxon>Paracoccaceae</taxon>
        <taxon>Cereibacter</taxon>
    </lineage>
</organism>
<feature type="chain" id="PRO_1000063995" description="2,3-bisphosphoglycerate-independent phosphoglycerate mutase">
    <location>
        <begin position="1"/>
        <end position="506"/>
    </location>
</feature>
<feature type="active site" description="Phosphoserine intermediate" evidence="1">
    <location>
        <position position="63"/>
    </location>
</feature>
<feature type="binding site" evidence="1">
    <location>
        <position position="13"/>
    </location>
    <ligand>
        <name>Mn(2+)</name>
        <dbReference type="ChEBI" id="CHEBI:29035"/>
        <label>2</label>
    </ligand>
</feature>
<feature type="binding site" evidence="1">
    <location>
        <position position="63"/>
    </location>
    <ligand>
        <name>Mn(2+)</name>
        <dbReference type="ChEBI" id="CHEBI:29035"/>
        <label>2</label>
    </ligand>
</feature>
<feature type="binding site" evidence="1">
    <location>
        <position position="124"/>
    </location>
    <ligand>
        <name>substrate</name>
    </ligand>
</feature>
<feature type="binding site" evidence="1">
    <location>
        <begin position="153"/>
        <end position="154"/>
    </location>
    <ligand>
        <name>substrate</name>
    </ligand>
</feature>
<feature type="binding site" evidence="1">
    <location>
        <position position="183"/>
    </location>
    <ligand>
        <name>substrate</name>
    </ligand>
</feature>
<feature type="binding site" evidence="1">
    <location>
        <position position="189"/>
    </location>
    <ligand>
        <name>substrate</name>
    </ligand>
</feature>
<feature type="binding site" evidence="1">
    <location>
        <begin position="254"/>
        <end position="257"/>
    </location>
    <ligand>
        <name>substrate</name>
    </ligand>
</feature>
<feature type="binding site" evidence="1">
    <location>
        <position position="330"/>
    </location>
    <ligand>
        <name>substrate</name>
    </ligand>
</feature>
<feature type="binding site" evidence="1">
    <location>
        <position position="396"/>
    </location>
    <ligand>
        <name>Mn(2+)</name>
        <dbReference type="ChEBI" id="CHEBI:29035"/>
        <label>1</label>
    </ligand>
</feature>
<feature type="binding site" evidence="1">
    <location>
        <position position="400"/>
    </location>
    <ligand>
        <name>Mn(2+)</name>
        <dbReference type="ChEBI" id="CHEBI:29035"/>
        <label>1</label>
    </ligand>
</feature>
<feature type="binding site" evidence="1">
    <location>
        <position position="437"/>
    </location>
    <ligand>
        <name>Mn(2+)</name>
        <dbReference type="ChEBI" id="CHEBI:29035"/>
        <label>2</label>
    </ligand>
</feature>
<feature type="binding site" evidence="1">
    <location>
        <position position="438"/>
    </location>
    <ligand>
        <name>Mn(2+)</name>
        <dbReference type="ChEBI" id="CHEBI:29035"/>
        <label>2</label>
    </ligand>
</feature>
<feature type="binding site" evidence="1">
    <location>
        <position position="456"/>
    </location>
    <ligand>
        <name>Mn(2+)</name>
        <dbReference type="ChEBI" id="CHEBI:29035"/>
        <label>1</label>
    </ligand>
</feature>
<comment type="function">
    <text evidence="1">Catalyzes the interconversion of 2-phosphoglycerate and 3-phosphoglycerate.</text>
</comment>
<comment type="catalytic activity">
    <reaction evidence="1">
        <text>(2R)-2-phosphoglycerate = (2R)-3-phosphoglycerate</text>
        <dbReference type="Rhea" id="RHEA:15901"/>
        <dbReference type="ChEBI" id="CHEBI:58272"/>
        <dbReference type="ChEBI" id="CHEBI:58289"/>
        <dbReference type="EC" id="5.4.2.12"/>
    </reaction>
</comment>
<comment type="cofactor">
    <cofactor evidence="1">
        <name>Mn(2+)</name>
        <dbReference type="ChEBI" id="CHEBI:29035"/>
    </cofactor>
    <text evidence="1">Binds 2 manganese ions per subunit.</text>
</comment>
<comment type="pathway">
    <text evidence="1">Carbohydrate degradation; glycolysis; pyruvate from D-glyceraldehyde 3-phosphate: step 3/5.</text>
</comment>
<comment type="subunit">
    <text evidence="1">Monomer.</text>
</comment>
<comment type="similarity">
    <text evidence="1">Belongs to the BPG-independent phosphoglycerate mutase family.</text>
</comment>
<proteinExistence type="inferred from homology"/>
<reference key="1">
    <citation type="submission" date="2005-09" db="EMBL/GenBank/DDBJ databases">
        <title>Complete sequence of chromosome 1 of Rhodobacter sphaeroides 2.4.1.</title>
        <authorList>
            <person name="Copeland A."/>
            <person name="Lucas S."/>
            <person name="Lapidus A."/>
            <person name="Barry K."/>
            <person name="Detter J.C."/>
            <person name="Glavina T."/>
            <person name="Hammon N."/>
            <person name="Israni S."/>
            <person name="Pitluck S."/>
            <person name="Richardson P."/>
            <person name="Mackenzie C."/>
            <person name="Choudhary M."/>
            <person name="Larimer F."/>
            <person name="Hauser L.J."/>
            <person name="Land M."/>
            <person name="Donohue T.J."/>
            <person name="Kaplan S."/>
        </authorList>
    </citation>
    <scope>NUCLEOTIDE SEQUENCE [LARGE SCALE GENOMIC DNA]</scope>
    <source>
        <strain>ATCC 17023 / DSM 158 / JCM 6121 / CCUG 31486 / LMG 2827 / NBRC 12203 / NCIMB 8253 / ATH 2.4.1.</strain>
    </source>
</reference>
<dbReference type="EC" id="5.4.2.12" evidence="1"/>
<dbReference type="EMBL" id="CP000143">
    <property type="protein sequence ID" value="ABA80116.1"/>
    <property type="molecule type" value="Genomic_DNA"/>
</dbReference>
<dbReference type="RefSeq" id="WP_011338604.1">
    <property type="nucleotide sequence ID" value="NC_007493.2"/>
</dbReference>
<dbReference type="RefSeq" id="YP_354017.1">
    <property type="nucleotide sequence ID" value="NC_007493.2"/>
</dbReference>
<dbReference type="SMR" id="Q3IZB8"/>
<dbReference type="STRING" id="272943.RSP_0934"/>
<dbReference type="EnsemblBacteria" id="ABA80116">
    <property type="protein sequence ID" value="ABA80116"/>
    <property type="gene ID" value="RSP_0934"/>
</dbReference>
<dbReference type="GeneID" id="3717921"/>
<dbReference type="KEGG" id="rsp:RSP_0934"/>
<dbReference type="PATRIC" id="fig|272943.9.peg.2902"/>
<dbReference type="eggNOG" id="COG0696">
    <property type="taxonomic scope" value="Bacteria"/>
</dbReference>
<dbReference type="OrthoDB" id="9800863at2"/>
<dbReference type="PhylomeDB" id="Q3IZB8"/>
<dbReference type="UniPathway" id="UPA00109">
    <property type="reaction ID" value="UER00186"/>
</dbReference>
<dbReference type="Proteomes" id="UP000002703">
    <property type="component" value="Chromosome 1"/>
</dbReference>
<dbReference type="GO" id="GO:0005829">
    <property type="term" value="C:cytosol"/>
    <property type="evidence" value="ECO:0007669"/>
    <property type="project" value="TreeGrafter"/>
</dbReference>
<dbReference type="GO" id="GO:0030145">
    <property type="term" value="F:manganese ion binding"/>
    <property type="evidence" value="ECO:0007669"/>
    <property type="project" value="UniProtKB-UniRule"/>
</dbReference>
<dbReference type="GO" id="GO:0004619">
    <property type="term" value="F:phosphoglycerate mutase activity"/>
    <property type="evidence" value="ECO:0007669"/>
    <property type="project" value="UniProtKB-EC"/>
</dbReference>
<dbReference type="GO" id="GO:0006007">
    <property type="term" value="P:glucose catabolic process"/>
    <property type="evidence" value="ECO:0007669"/>
    <property type="project" value="InterPro"/>
</dbReference>
<dbReference type="GO" id="GO:0006096">
    <property type="term" value="P:glycolytic process"/>
    <property type="evidence" value="ECO:0007669"/>
    <property type="project" value="UniProtKB-UniRule"/>
</dbReference>
<dbReference type="CDD" id="cd16010">
    <property type="entry name" value="iPGM"/>
    <property type="match status" value="1"/>
</dbReference>
<dbReference type="FunFam" id="3.40.1450.10:FF:000002">
    <property type="entry name" value="2,3-bisphosphoglycerate-independent phosphoglycerate mutase"/>
    <property type="match status" value="1"/>
</dbReference>
<dbReference type="Gene3D" id="3.40.720.10">
    <property type="entry name" value="Alkaline Phosphatase, subunit A"/>
    <property type="match status" value="1"/>
</dbReference>
<dbReference type="Gene3D" id="3.40.1450.10">
    <property type="entry name" value="BPG-independent phosphoglycerate mutase, domain B"/>
    <property type="match status" value="1"/>
</dbReference>
<dbReference type="HAMAP" id="MF_01038">
    <property type="entry name" value="GpmI"/>
    <property type="match status" value="1"/>
</dbReference>
<dbReference type="InterPro" id="IPR017850">
    <property type="entry name" value="Alkaline_phosphatase_core_sf"/>
</dbReference>
<dbReference type="InterPro" id="IPR011258">
    <property type="entry name" value="BPG-indep_PGM_N"/>
</dbReference>
<dbReference type="InterPro" id="IPR006124">
    <property type="entry name" value="Metalloenzyme"/>
</dbReference>
<dbReference type="InterPro" id="IPR036646">
    <property type="entry name" value="PGAM_B_sf"/>
</dbReference>
<dbReference type="InterPro" id="IPR005995">
    <property type="entry name" value="Pgm_bpd_ind"/>
</dbReference>
<dbReference type="NCBIfam" id="TIGR01307">
    <property type="entry name" value="pgm_bpd_ind"/>
    <property type="match status" value="1"/>
</dbReference>
<dbReference type="PANTHER" id="PTHR31637">
    <property type="entry name" value="2,3-BISPHOSPHOGLYCERATE-INDEPENDENT PHOSPHOGLYCERATE MUTASE"/>
    <property type="match status" value="1"/>
</dbReference>
<dbReference type="PANTHER" id="PTHR31637:SF0">
    <property type="entry name" value="2,3-BISPHOSPHOGLYCERATE-INDEPENDENT PHOSPHOGLYCERATE MUTASE"/>
    <property type="match status" value="1"/>
</dbReference>
<dbReference type="Pfam" id="PF06415">
    <property type="entry name" value="iPGM_N"/>
    <property type="match status" value="1"/>
</dbReference>
<dbReference type="Pfam" id="PF01676">
    <property type="entry name" value="Metalloenzyme"/>
    <property type="match status" value="1"/>
</dbReference>
<dbReference type="PIRSF" id="PIRSF001492">
    <property type="entry name" value="IPGAM"/>
    <property type="match status" value="1"/>
</dbReference>
<dbReference type="SUPFAM" id="SSF64158">
    <property type="entry name" value="2,3-Bisphosphoglycerate-independent phosphoglycerate mutase, substrate-binding domain"/>
    <property type="match status" value="1"/>
</dbReference>
<dbReference type="SUPFAM" id="SSF53649">
    <property type="entry name" value="Alkaline phosphatase-like"/>
    <property type="match status" value="1"/>
</dbReference>
<accession>Q3IZB8</accession>
<name>GPMI_CERS4</name>